<reference key="1">
    <citation type="journal article" date="2002" name="Nucleic Acids Res.">
        <title>The complete genomic sequence of Mycoplasma penetrans, an intracellular bacterial pathogen in humans.</title>
        <authorList>
            <person name="Sasaki Y."/>
            <person name="Ishikawa J."/>
            <person name="Yamashita A."/>
            <person name="Oshima K."/>
            <person name="Kenri T."/>
            <person name="Furuya K."/>
            <person name="Yoshino C."/>
            <person name="Horino A."/>
            <person name="Shiba T."/>
            <person name="Sasaki T."/>
            <person name="Hattori M."/>
        </authorList>
    </citation>
    <scope>NUCLEOTIDE SEQUENCE [LARGE SCALE GENOMIC DNA]</scope>
    <source>
        <strain>HF-2</strain>
    </source>
</reference>
<name>SYG_MALP2</name>
<dbReference type="EC" id="6.1.1.14" evidence="1"/>
<dbReference type="EMBL" id="BA000026">
    <property type="protein sequence ID" value="BAC44132.1"/>
    <property type="molecule type" value="Genomic_DNA"/>
</dbReference>
<dbReference type="RefSeq" id="WP_011077168.1">
    <property type="nucleotide sequence ID" value="NC_004432.1"/>
</dbReference>
<dbReference type="SMR" id="Q8EW64"/>
<dbReference type="STRING" id="272633.gene:10731444"/>
<dbReference type="KEGG" id="mpe:MYPE3390"/>
<dbReference type="eggNOG" id="COG0423">
    <property type="taxonomic scope" value="Bacteria"/>
</dbReference>
<dbReference type="HOGENOM" id="CLU_015515_2_0_14"/>
<dbReference type="InParanoid" id="Q8EW64"/>
<dbReference type="Proteomes" id="UP000002522">
    <property type="component" value="Chromosome"/>
</dbReference>
<dbReference type="GO" id="GO:0005737">
    <property type="term" value="C:cytoplasm"/>
    <property type="evidence" value="ECO:0007669"/>
    <property type="project" value="UniProtKB-SubCell"/>
</dbReference>
<dbReference type="GO" id="GO:0005524">
    <property type="term" value="F:ATP binding"/>
    <property type="evidence" value="ECO:0007669"/>
    <property type="project" value="UniProtKB-UniRule"/>
</dbReference>
<dbReference type="GO" id="GO:0004820">
    <property type="term" value="F:glycine-tRNA ligase activity"/>
    <property type="evidence" value="ECO:0000250"/>
    <property type="project" value="UniProtKB"/>
</dbReference>
<dbReference type="GO" id="GO:0046983">
    <property type="term" value="F:protein dimerization activity"/>
    <property type="evidence" value="ECO:0000250"/>
    <property type="project" value="UniProtKB"/>
</dbReference>
<dbReference type="GO" id="GO:0006426">
    <property type="term" value="P:glycyl-tRNA aminoacylation"/>
    <property type="evidence" value="ECO:0007669"/>
    <property type="project" value="UniProtKB-UniRule"/>
</dbReference>
<dbReference type="CDD" id="cd00774">
    <property type="entry name" value="GlyRS-like_core"/>
    <property type="match status" value="1"/>
</dbReference>
<dbReference type="CDD" id="cd00858">
    <property type="entry name" value="GlyRS_anticodon"/>
    <property type="match status" value="1"/>
</dbReference>
<dbReference type="FunFam" id="3.40.50.800:FF:000002">
    <property type="entry name" value="Glycine--tRNA ligase"/>
    <property type="match status" value="1"/>
</dbReference>
<dbReference type="Gene3D" id="3.40.50.800">
    <property type="entry name" value="Anticodon-binding domain"/>
    <property type="match status" value="1"/>
</dbReference>
<dbReference type="Gene3D" id="3.30.930.10">
    <property type="entry name" value="Bira Bifunctional Protein, Domain 2"/>
    <property type="match status" value="1"/>
</dbReference>
<dbReference type="HAMAP" id="MF_00253_B">
    <property type="entry name" value="Gly_tRNA_synth_B"/>
    <property type="match status" value="1"/>
</dbReference>
<dbReference type="InterPro" id="IPR002314">
    <property type="entry name" value="aa-tRNA-synt_IIb"/>
</dbReference>
<dbReference type="InterPro" id="IPR006195">
    <property type="entry name" value="aa-tRNA-synth_II"/>
</dbReference>
<dbReference type="InterPro" id="IPR045864">
    <property type="entry name" value="aa-tRNA-synth_II/BPL/LPL"/>
</dbReference>
<dbReference type="InterPro" id="IPR004154">
    <property type="entry name" value="Anticodon-bd"/>
</dbReference>
<dbReference type="InterPro" id="IPR036621">
    <property type="entry name" value="Anticodon-bd_dom_sf"/>
</dbReference>
<dbReference type="InterPro" id="IPR027031">
    <property type="entry name" value="Gly-tRNA_synthase/POLG2"/>
</dbReference>
<dbReference type="InterPro" id="IPR022961">
    <property type="entry name" value="Gly_tRNA_ligase_bac"/>
</dbReference>
<dbReference type="InterPro" id="IPR033731">
    <property type="entry name" value="GlyRS-like_core"/>
</dbReference>
<dbReference type="InterPro" id="IPR002315">
    <property type="entry name" value="tRNA-synt_gly"/>
</dbReference>
<dbReference type="NCBIfam" id="TIGR00389">
    <property type="entry name" value="glyS_dimeric"/>
    <property type="match status" value="1"/>
</dbReference>
<dbReference type="NCBIfam" id="NF003211">
    <property type="entry name" value="PRK04173.1"/>
    <property type="match status" value="1"/>
</dbReference>
<dbReference type="PANTHER" id="PTHR10745:SF8">
    <property type="entry name" value="DNA POLYMERASE SUBUNIT GAMMA-2, MITOCHONDRIAL"/>
    <property type="match status" value="1"/>
</dbReference>
<dbReference type="PANTHER" id="PTHR10745">
    <property type="entry name" value="GLYCYL-TRNA SYNTHETASE/DNA POLYMERASE SUBUNIT GAMMA-2"/>
    <property type="match status" value="1"/>
</dbReference>
<dbReference type="Pfam" id="PF03129">
    <property type="entry name" value="HGTP_anticodon"/>
    <property type="match status" value="1"/>
</dbReference>
<dbReference type="Pfam" id="PF00587">
    <property type="entry name" value="tRNA-synt_2b"/>
    <property type="match status" value="1"/>
</dbReference>
<dbReference type="PRINTS" id="PR01043">
    <property type="entry name" value="TRNASYNTHGLY"/>
</dbReference>
<dbReference type="SUPFAM" id="SSF52954">
    <property type="entry name" value="Class II aaRS ABD-related"/>
    <property type="match status" value="1"/>
</dbReference>
<dbReference type="SUPFAM" id="SSF55681">
    <property type="entry name" value="Class II aaRS and biotin synthetases"/>
    <property type="match status" value="1"/>
</dbReference>
<dbReference type="PROSITE" id="PS50862">
    <property type="entry name" value="AA_TRNA_LIGASE_II"/>
    <property type="match status" value="1"/>
</dbReference>
<feature type="chain" id="PRO_0000072967" description="Glycine--tRNA ligase">
    <location>
        <begin position="1"/>
        <end position="462"/>
    </location>
</feature>
<feature type="binding site" evidence="1">
    <location>
        <position position="100"/>
    </location>
    <ligand>
        <name>substrate</name>
    </ligand>
</feature>
<feature type="binding site" evidence="1">
    <location>
        <position position="170"/>
    </location>
    <ligand>
        <name>substrate</name>
    </ligand>
</feature>
<feature type="binding site" evidence="1">
    <location>
        <begin position="202"/>
        <end position="204"/>
    </location>
    <ligand>
        <name>ATP</name>
        <dbReference type="ChEBI" id="CHEBI:30616"/>
    </ligand>
</feature>
<feature type="binding site" evidence="1">
    <location>
        <begin position="212"/>
        <end position="217"/>
    </location>
    <ligand>
        <name>ATP</name>
        <dbReference type="ChEBI" id="CHEBI:30616"/>
    </ligand>
</feature>
<feature type="binding site" evidence="1">
    <location>
        <begin position="217"/>
        <end position="221"/>
    </location>
    <ligand>
        <name>substrate</name>
    </ligand>
</feature>
<feature type="binding site" evidence="1">
    <location>
        <begin position="287"/>
        <end position="288"/>
    </location>
    <ligand>
        <name>ATP</name>
        <dbReference type="ChEBI" id="CHEBI:30616"/>
    </ligand>
</feature>
<feature type="binding site" evidence="1">
    <location>
        <begin position="327"/>
        <end position="331"/>
    </location>
    <ligand>
        <name>substrate</name>
    </ligand>
</feature>
<feature type="binding site" evidence="1">
    <location>
        <begin position="331"/>
        <end position="334"/>
    </location>
    <ligand>
        <name>ATP</name>
        <dbReference type="ChEBI" id="CHEBI:30616"/>
    </ligand>
</feature>
<accession>Q8EW64</accession>
<proteinExistence type="inferred from homology"/>
<organism>
    <name type="scientific">Malacoplasma penetrans (strain HF-2)</name>
    <name type="common">Mycoplasma penetrans</name>
    <dbReference type="NCBI Taxonomy" id="272633"/>
    <lineage>
        <taxon>Bacteria</taxon>
        <taxon>Bacillati</taxon>
        <taxon>Mycoplasmatota</taxon>
        <taxon>Mycoplasmoidales</taxon>
        <taxon>Mycoplasmoidaceae</taxon>
        <taxon>Malacoplasma</taxon>
    </lineage>
</organism>
<keyword id="KW-0030">Aminoacyl-tRNA synthetase</keyword>
<keyword id="KW-0067">ATP-binding</keyword>
<keyword id="KW-0963">Cytoplasm</keyword>
<keyword id="KW-0436">Ligase</keyword>
<keyword id="KW-0547">Nucleotide-binding</keyword>
<keyword id="KW-0648">Protein biosynthesis</keyword>
<keyword id="KW-1185">Reference proteome</keyword>
<protein>
    <recommendedName>
        <fullName evidence="1">Glycine--tRNA ligase</fullName>
        <ecNumber evidence="1">6.1.1.14</ecNumber>
    </recommendedName>
    <alternativeName>
        <fullName evidence="1">Glycyl-tRNA synthetase</fullName>
        <shortName evidence="1">GlyRS</shortName>
    </alternativeName>
</protein>
<comment type="function">
    <text evidence="1">Catalyzes the attachment of glycine to tRNA(Gly).</text>
</comment>
<comment type="catalytic activity">
    <reaction evidence="1">
        <text>tRNA(Gly) + glycine + ATP = glycyl-tRNA(Gly) + AMP + diphosphate</text>
        <dbReference type="Rhea" id="RHEA:16013"/>
        <dbReference type="Rhea" id="RHEA-COMP:9664"/>
        <dbReference type="Rhea" id="RHEA-COMP:9683"/>
        <dbReference type="ChEBI" id="CHEBI:30616"/>
        <dbReference type="ChEBI" id="CHEBI:33019"/>
        <dbReference type="ChEBI" id="CHEBI:57305"/>
        <dbReference type="ChEBI" id="CHEBI:78442"/>
        <dbReference type="ChEBI" id="CHEBI:78522"/>
        <dbReference type="ChEBI" id="CHEBI:456215"/>
        <dbReference type="EC" id="6.1.1.14"/>
    </reaction>
</comment>
<comment type="subunit">
    <text evidence="1">Homodimer.</text>
</comment>
<comment type="subcellular location">
    <subcellularLocation>
        <location evidence="1">Cytoplasm</location>
    </subcellularLocation>
</comment>
<comment type="similarity">
    <text evidence="1">Belongs to the class-II aminoacyl-tRNA synthetase family.</text>
</comment>
<evidence type="ECO:0000255" key="1">
    <source>
        <dbReference type="HAMAP-Rule" id="MF_00253"/>
    </source>
</evidence>
<sequence length="462" mass="53926">MSKKIDQETIVNHFKNYGFVYQNSEIYNGLANAWDFGPLGSLIKNNLKNLWLKHFIYSKKEMHLIDTNIILNPLVWKASGHIDNFSDPLIDCKECKSRFRADKLILENTKEEINEQTDSDTLIKIISDNKIKCPNCKKSNWTEIRKFNLMFDTSIGVVDDKKDLVYLRPETAQGIFINFKNIQRTQRQKLPFGVGQIGKAFRNEITPGNFIFRTREFEQMEIEYFCDKKDSPKVFDNFLESIKTFLFKTLKIHENNIKIIDYPKEELAHYSSRTVDFLYNFPHGYSELWGLADRGEFDLTAHQNLSKKSLEYLNEETKEKFVPSVIEPSVGVERLLYAILIDAYDEEKIDEENNRVVLKLIPELAPYKFAVLPLSNKLNDKAEEIFNNLILSNICTYDSSGSIGKRYRRQDAIGTPYCITVDFDTLEDECVTIRDRDSMKQIRIKIKDIDLSKVQELFKNAK</sequence>
<gene>
    <name evidence="1" type="primary">glyQS</name>
    <name type="ordered locus">MYPE3390</name>
</gene>